<sequence>MAAATVGRDTLPEHWSYGVCRDGRVFFINDQLRCTTWLHPRTGEPVNSGHMIRSDLPRGWEEGFTEEGASYFIDHNQQTTAFRHPVTGQFSPENSEFILQEEPNPHMSKQDRNQRPSSMVSETSTAGTASTLEAKPGPKIIKSSSKVHSFGKRDQAIRRNPNVPVVVRGWLHKQDSSGMRLWKRRWFVLADYCLFYYKDSREEAVLGSIPLPSYVISPVAPEDRISRKYSFKAVHTGMRALIYNSSTAGSQAEQSGMRTYYFSADTQEDMNAWVRAMNQAAQVLSRSSLKRDMEKVERQAVPQANHTESCHECGRVGPGHTRDCPHRGHDDIVNFERQEQEGEQYRSQRDPLEGKRDRSKARSPYSPAEEDALFMDLPTGPRGQQAQPQRAEKNGMLPASYGPGEQNGTGGYQRAFPPRTNPEKHSQRKSNLAQVEHWARAQKGDSRSLPLDQTLPRQGPGQSLSFPENYQTLPKSTRHPSGGSSPPPRNLPSDYKYAQDRASHLKMSSEERRAHRDGTVWQLYEWQQRQQFRHGSPTAPICLGSPEFTDQGRSRSMLEVPRSISVPPSPSDIPPPGPPRVFPPRRPHTPAERVTVKPPDQRRSVDISLGDSPRRARGHAVKNSSHVDRRSMPSMGYMTHTVSAPSLHGKSADDTYLQLKKDLEYLDLKMTGRDLLKDRSLKPVKIAESDTDVKLSIFCEQDRVLQDLEDKIRALKENKDQLESVLEVLHRQMEQYRDQPQHLEKIAYQQKLLQEDLVHIRAELSRESTEMENAWNEYLKLENDVEQLKQTLQEQHRRAFFFQEKSQIQKDLWRIEDVTAGLSANKENFRILVESVKNPERKTVPLFPHPPVPSLSTSESKPPPQPSPPTSPVRTPLEVRLFPQLQTYVPYRPHPPQLRKVTSPLQSPTKAKPKVEDEAPPRPPLPELYSPEDQPPAVPPLPREATIIRHTSVRGLKRQSDERKRDRELGQCVNGDSRVELRSYVSEPELATLSGDMAQPSLGLVGPESRYQTLPGRGLSGSTSRLQQSSTIAPYVTLRRGLNAESSKATFPRPKSALERLYSGDHQRGKMSAEEQLERMKRHQKALVRERKRTLGQGERTGLPSSRYLSRPLPGDLGSVC</sequence>
<keyword id="KW-0002">3D-structure</keyword>
<keyword id="KW-0025">Alternative splicing</keyword>
<keyword id="KW-0965">Cell junction</keyword>
<keyword id="KW-0175">Coiled coil</keyword>
<keyword id="KW-0963">Cytoplasm</keyword>
<keyword id="KW-0206">Cytoskeleton</keyword>
<keyword id="KW-0597">Phosphoprotein</keyword>
<keyword id="KW-1267">Proteomics identification</keyword>
<keyword id="KW-1185">Reference proteome</keyword>
<keyword id="KW-0677">Repeat</keyword>
<reference key="1">
    <citation type="journal article" date="2004" name="Nat. Genet.">
        <title>Complete sequencing and characterization of 21,243 full-length human cDNAs.</title>
        <authorList>
            <person name="Ota T."/>
            <person name="Suzuki Y."/>
            <person name="Nishikawa T."/>
            <person name="Otsuki T."/>
            <person name="Sugiyama T."/>
            <person name="Irie R."/>
            <person name="Wakamatsu A."/>
            <person name="Hayashi K."/>
            <person name="Sato H."/>
            <person name="Nagai K."/>
            <person name="Kimura K."/>
            <person name="Makita H."/>
            <person name="Sekine M."/>
            <person name="Obayashi M."/>
            <person name="Nishi T."/>
            <person name="Shibahara T."/>
            <person name="Tanaka T."/>
            <person name="Ishii S."/>
            <person name="Yamamoto J."/>
            <person name="Saito K."/>
            <person name="Kawai Y."/>
            <person name="Isono Y."/>
            <person name="Nakamura Y."/>
            <person name="Nagahari K."/>
            <person name="Murakami K."/>
            <person name="Yasuda T."/>
            <person name="Iwayanagi T."/>
            <person name="Wagatsuma M."/>
            <person name="Shiratori A."/>
            <person name="Sudo H."/>
            <person name="Hosoiri T."/>
            <person name="Kaku Y."/>
            <person name="Kodaira H."/>
            <person name="Kondo H."/>
            <person name="Sugawara M."/>
            <person name="Takahashi M."/>
            <person name="Kanda K."/>
            <person name="Yokoi T."/>
            <person name="Furuya T."/>
            <person name="Kikkawa E."/>
            <person name="Omura Y."/>
            <person name="Abe K."/>
            <person name="Kamihara K."/>
            <person name="Katsuta N."/>
            <person name="Sato K."/>
            <person name="Tanikawa M."/>
            <person name="Yamazaki M."/>
            <person name="Ninomiya K."/>
            <person name="Ishibashi T."/>
            <person name="Yamashita H."/>
            <person name="Murakawa K."/>
            <person name="Fujimori K."/>
            <person name="Tanai H."/>
            <person name="Kimata M."/>
            <person name="Watanabe M."/>
            <person name="Hiraoka S."/>
            <person name="Chiba Y."/>
            <person name="Ishida S."/>
            <person name="Ono Y."/>
            <person name="Takiguchi S."/>
            <person name="Watanabe S."/>
            <person name="Yosida M."/>
            <person name="Hotuta T."/>
            <person name="Kusano J."/>
            <person name="Kanehori K."/>
            <person name="Takahashi-Fujii A."/>
            <person name="Hara H."/>
            <person name="Tanase T.-O."/>
            <person name="Nomura Y."/>
            <person name="Togiya S."/>
            <person name="Komai F."/>
            <person name="Hara R."/>
            <person name="Takeuchi K."/>
            <person name="Arita M."/>
            <person name="Imose N."/>
            <person name="Musashino K."/>
            <person name="Yuuki H."/>
            <person name="Oshima A."/>
            <person name="Sasaki N."/>
            <person name="Aotsuka S."/>
            <person name="Yoshikawa Y."/>
            <person name="Matsunawa H."/>
            <person name="Ichihara T."/>
            <person name="Shiohata N."/>
            <person name="Sano S."/>
            <person name="Moriya S."/>
            <person name="Momiyama H."/>
            <person name="Satoh N."/>
            <person name="Takami S."/>
            <person name="Terashima Y."/>
            <person name="Suzuki O."/>
            <person name="Nakagawa S."/>
            <person name="Senoh A."/>
            <person name="Mizoguchi H."/>
            <person name="Goto Y."/>
            <person name="Shimizu F."/>
            <person name="Wakebe H."/>
            <person name="Hishigaki H."/>
            <person name="Watanabe T."/>
            <person name="Sugiyama A."/>
            <person name="Takemoto M."/>
            <person name="Kawakami B."/>
            <person name="Yamazaki M."/>
            <person name="Watanabe K."/>
            <person name="Kumagai A."/>
            <person name="Itakura S."/>
            <person name="Fukuzumi Y."/>
            <person name="Fujimori Y."/>
            <person name="Komiyama M."/>
            <person name="Tashiro H."/>
            <person name="Tanigami A."/>
            <person name="Fujiwara T."/>
            <person name="Ono T."/>
            <person name="Yamada K."/>
            <person name="Fujii Y."/>
            <person name="Ozaki K."/>
            <person name="Hirao M."/>
            <person name="Ohmori Y."/>
            <person name="Kawabata A."/>
            <person name="Hikiji T."/>
            <person name="Kobatake N."/>
            <person name="Inagaki H."/>
            <person name="Ikema Y."/>
            <person name="Okamoto S."/>
            <person name="Okitani R."/>
            <person name="Kawakami T."/>
            <person name="Noguchi S."/>
            <person name="Itoh T."/>
            <person name="Shigeta K."/>
            <person name="Senba T."/>
            <person name="Matsumura K."/>
            <person name="Nakajima Y."/>
            <person name="Mizuno T."/>
            <person name="Morinaga M."/>
            <person name="Sasaki M."/>
            <person name="Togashi T."/>
            <person name="Oyama M."/>
            <person name="Hata H."/>
            <person name="Watanabe M."/>
            <person name="Komatsu T."/>
            <person name="Mizushima-Sugano J."/>
            <person name="Satoh T."/>
            <person name="Shirai Y."/>
            <person name="Takahashi Y."/>
            <person name="Nakagawa K."/>
            <person name="Okumura K."/>
            <person name="Nagase T."/>
            <person name="Nomura N."/>
            <person name="Kikuchi H."/>
            <person name="Masuho Y."/>
            <person name="Yamashita R."/>
            <person name="Nakai K."/>
            <person name="Yada T."/>
            <person name="Nakamura Y."/>
            <person name="Ohara O."/>
            <person name="Isogai T."/>
            <person name="Sugano S."/>
        </authorList>
    </citation>
    <scope>NUCLEOTIDE SEQUENCE [LARGE SCALE MRNA] (ISOFORM 3)</scope>
    <source>
        <tissue>Synovium</tissue>
        <tissue>Thalamus</tissue>
    </source>
</reference>
<reference key="2">
    <citation type="journal article" date="2006" name="Nature">
        <title>Human chromosome 11 DNA sequence and analysis including novel gene identification.</title>
        <authorList>
            <person name="Taylor T.D."/>
            <person name="Noguchi H."/>
            <person name="Totoki Y."/>
            <person name="Toyoda A."/>
            <person name="Kuroki Y."/>
            <person name="Dewar K."/>
            <person name="Lloyd C."/>
            <person name="Itoh T."/>
            <person name="Takeda T."/>
            <person name="Kim D.-W."/>
            <person name="She X."/>
            <person name="Barlow K.F."/>
            <person name="Bloom T."/>
            <person name="Bruford E."/>
            <person name="Chang J.L."/>
            <person name="Cuomo C.A."/>
            <person name="Eichler E."/>
            <person name="FitzGerald M.G."/>
            <person name="Jaffe D.B."/>
            <person name="LaButti K."/>
            <person name="Nicol R."/>
            <person name="Park H.-S."/>
            <person name="Seaman C."/>
            <person name="Sougnez C."/>
            <person name="Yang X."/>
            <person name="Zimmer A.R."/>
            <person name="Zody M.C."/>
            <person name="Birren B.W."/>
            <person name="Nusbaum C."/>
            <person name="Fujiyama A."/>
            <person name="Hattori M."/>
            <person name="Rogers J."/>
            <person name="Lander E.S."/>
            <person name="Sakaki Y."/>
        </authorList>
    </citation>
    <scope>NUCLEOTIDE SEQUENCE [LARGE SCALE GENOMIC DNA]</scope>
</reference>
<reference key="3">
    <citation type="journal article" date="2004" name="Genome Res.">
        <title>The status, quality, and expansion of the NIH full-length cDNA project: the Mammalian Gene Collection (MGC).</title>
        <authorList>
            <consortium name="The MGC Project Team"/>
        </authorList>
    </citation>
    <scope>NUCLEOTIDE SEQUENCE [LARGE SCALE MRNA] (ISOFORMS 1 AND 2)</scope>
    <source>
        <tissue>Brain</tissue>
        <tissue>Placenta</tissue>
    </source>
</reference>
<reference key="4">
    <citation type="journal article" date="2004" name="Anal. Chem.">
        <title>Robust phosphoproteomic profiling of tyrosine phosphorylation sites from human T cells using immobilized metal affinity chromatography and tandem mass spectrometry.</title>
        <authorList>
            <person name="Brill L.M."/>
            <person name="Salomon A.R."/>
            <person name="Ficarro S.B."/>
            <person name="Mukherji M."/>
            <person name="Stettler-Gill M."/>
            <person name="Peters E.C."/>
        </authorList>
    </citation>
    <scope>IDENTIFICATION BY MASS SPECTROMETRY [LARGE SCALE ANALYSIS]</scope>
    <source>
        <tissue>Leukemic T-cell</tissue>
    </source>
</reference>
<reference key="5">
    <citation type="journal article" date="2008" name="Cell">
        <title>Anchorage of microtubule minus ends to adherens junctions regulates epithelial cell-cell contacts.</title>
        <authorList>
            <person name="Meng W."/>
            <person name="Mushika Y."/>
            <person name="Ichii T."/>
            <person name="Takeichi M."/>
        </authorList>
    </citation>
    <scope>FUNCTION</scope>
    <scope>SUBCELLULAR LOCATION</scope>
    <scope>INTERACTION WITH CAMSAP3 AND CTNND1</scope>
</reference>
<reference key="6">
    <citation type="journal article" date="2008" name="Proc. Natl. Acad. Sci. U.S.A.">
        <title>A quantitative atlas of mitotic phosphorylation.</title>
        <authorList>
            <person name="Dephoure N."/>
            <person name="Zhou C."/>
            <person name="Villen J."/>
            <person name="Beausoleil S.A."/>
            <person name="Bakalarski C.E."/>
            <person name="Elledge S.J."/>
            <person name="Gygi S.P."/>
        </authorList>
    </citation>
    <scope>PHOSPHORYLATION [LARGE SCALE ANALYSIS] AT SER-903 AND SER-907</scope>
    <scope>IDENTIFICATION BY MASS SPECTROMETRY [LARGE SCALE ANALYSIS]</scope>
    <source>
        <tissue>Cervix carcinoma</tissue>
    </source>
</reference>
<reference key="7">
    <citation type="journal article" date="2009" name="Anal. Chem.">
        <title>Lys-N and trypsin cover complementary parts of the phosphoproteome in a refined SCX-based approach.</title>
        <authorList>
            <person name="Gauci S."/>
            <person name="Helbig A.O."/>
            <person name="Slijper M."/>
            <person name="Krijgsveld J."/>
            <person name="Heck A.J."/>
            <person name="Mohammed S."/>
        </authorList>
    </citation>
    <scope>IDENTIFICATION BY MASS SPECTROMETRY [LARGE SCALE ANALYSIS]</scope>
</reference>
<reference key="8">
    <citation type="journal article" date="2009" name="Sci. Signal.">
        <title>Quantitative phosphoproteomic analysis of T cell receptor signaling reveals system-wide modulation of protein-protein interactions.</title>
        <authorList>
            <person name="Mayya V."/>
            <person name="Lundgren D.H."/>
            <person name="Hwang S.-I."/>
            <person name="Rezaul K."/>
            <person name="Wu L."/>
            <person name="Eng J.K."/>
            <person name="Rodionov V."/>
            <person name="Han D.K."/>
        </authorList>
    </citation>
    <scope>PHOSPHORYLATION [LARGE SCALE ANALYSIS] AT SER-604; SER-612; SER-903; SER-907 AND SER-986</scope>
    <scope>IDENTIFICATION BY MASS SPECTROMETRY [LARGE SCALE ANALYSIS]</scope>
    <source>
        <tissue>Leukemic T-cell</tissue>
    </source>
</reference>
<reference key="9">
    <citation type="journal article" date="2011" name="Sci. Signal.">
        <title>System-wide temporal characterization of the proteome and phosphoproteome of human embryonic stem cell differentiation.</title>
        <authorList>
            <person name="Rigbolt K.T."/>
            <person name="Prokhorova T.A."/>
            <person name="Akimov V."/>
            <person name="Henningsen J."/>
            <person name="Johansen P.T."/>
            <person name="Kratchmarova I."/>
            <person name="Kassem M."/>
            <person name="Mann M."/>
            <person name="Olsen J.V."/>
            <person name="Blagoev B."/>
        </authorList>
    </citation>
    <scope>PHOSPHORYLATION [LARGE SCALE ANALYSIS] AT SER-903 AND SER-907</scope>
    <scope>IDENTIFICATION BY MASS SPECTROMETRY [LARGE SCALE ANALYSIS]</scope>
</reference>
<reference key="10">
    <citation type="journal article" date="2013" name="J. Proteome Res.">
        <title>Toward a comprehensive characterization of a human cancer cell phosphoproteome.</title>
        <authorList>
            <person name="Zhou H."/>
            <person name="Di Palma S."/>
            <person name="Preisinger C."/>
            <person name="Peng M."/>
            <person name="Polat A.N."/>
            <person name="Heck A.J."/>
            <person name="Mohammed S."/>
        </authorList>
    </citation>
    <scope>PHOSPHORYLATION [LARGE SCALE ANALYSIS] AT SER-612; SER-903 AND SER-907</scope>
    <scope>IDENTIFICATION BY MASS SPECTROMETRY [LARGE SCALE ANALYSIS]</scope>
    <source>
        <tissue>Cervix carcinoma</tissue>
    </source>
</reference>
<reference key="11">
    <citation type="journal article" date="2014" name="J. Proteomics">
        <title>An enzyme assisted RP-RPLC approach for in-depth analysis of human liver phosphoproteome.</title>
        <authorList>
            <person name="Bian Y."/>
            <person name="Song C."/>
            <person name="Cheng K."/>
            <person name="Dong M."/>
            <person name="Wang F."/>
            <person name="Huang J."/>
            <person name="Sun D."/>
            <person name="Wang L."/>
            <person name="Ye M."/>
            <person name="Zou H."/>
        </authorList>
    </citation>
    <scope>PHOSPHORYLATION [LARGE SCALE ANALYSIS] AT SER-536; SER-569; SER-604; SER-608; SER-612; SER-858; SER-860; SER-867; THR-870; SER-871; SER-903 AND SER-907</scope>
    <scope>IDENTIFICATION BY MASS SPECTROMETRY [LARGE SCALE ANALYSIS]</scope>
    <source>
        <tissue>Liver</tissue>
    </source>
</reference>
<reference key="12">
    <citation type="journal article" date="2018" name="Cell Rep.">
        <title>A Dock-and-Lock Mechanism Clusters ADAM10 at Cell-Cell Junctions to Promote alpha-Toxin Cytotoxicity.</title>
        <authorList>
            <person name="Shah J."/>
            <person name="Rouaud F."/>
            <person name="Guerrera D."/>
            <person name="Vasileva E."/>
            <person name="Popov L.M."/>
            <person name="Kelley W.L."/>
            <person name="Rubinstein E."/>
            <person name="Carette J.E."/>
            <person name="Amieva M.R."/>
            <person name="Citi S."/>
        </authorList>
    </citation>
    <scope>FUNCTION</scope>
    <scope>INTERACTION WITH PDZD11 AND TSPAN33</scope>
    <scope>SUBCELLULAR LOCATION</scope>
</reference>
<feature type="chain" id="PRO_0000287692" description="Pleckstrin homology domain-containing family A member 7">
    <location>
        <begin position="1"/>
        <end position="1121"/>
    </location>
</feature>
<feature type="domain" description="WW 1" evidence="4">
    <location>
        <begin position="9"/>
        <end position="42"/>
    </location>
</feature>
<feature type="domain" description="WW 2" evidence="4">
    <location>
        <begin position="54"/>
        <end position="87"/>
    </location>
</feature>
<feature type="domain" description="PH" evidence="3">
    <location>
        <begin position="164"/>
        <end position="282"/>
    </location>
</feature>
<feature type="region of interest" description="Disordered" evidence="5">
    <location>
        <begin position="105"/>
        <end position="137"/>
    </location>
</feature>
<feature type="region of interest" description="Disordered" evidence="5">
    <location>
        <begin position="299"/>
        <end position="514"/>
    </location>
</feature>
<feature type="region of interest" description="Interaction with CTNND1" evidence="6">
    <location>
        <begin position="538"/>
        <end position="696"/>
    </location>
</feature>
<feature type="region of interest" description="Disordered" evidence="5">
    <location>
        <begin position="547"/>
        <end position="632"/>
    </location>
</feature>
<feature type="region of interest" description="Disordered" evidence="5">
    <location>
        <begin position="841"/>
        <end position="876"/>
    </location>
</feature>
<feature type="region of interest" description="Disordered" evidence="5">
    <location>
        <begin position="888"/>
        <end position="971"/>
    </location>
</feature>
<feature type="region of interest" description="Disordered" evidence="5">
    <location>
        <begin position="1003"/>
        <end position="1028"/>
    </location>
</feature>
<feature type="region of interest" description="Disordered" evidence="5">
    <location>
        <begin position="1082"/>
        <end position="1121"/>
    </location>
</feature>
<feature type="coiled-coil region" evidence="2">
    <location>
        <begin position="700"/>
        <end position="801"/>
    </location>
</feature>
<feature type="coiled-coil region" evidence="2">
    <location>
        <begin position="1067"/>
        <end position="1094"/>
    </location>
</feature>
<feature type="compositionally biased region" description="Polar residues" evidence="5">
    <location>
        <begin position="115"/>
        <end position="131"/>
    </location>
</feature>
<feature type="compositionally biased region" description="Basic and acidic residues" evidence="5">
    <location>
        <begin position="308"/>
        <end position="356"/>
    </location>
</feature>
<feature type="compositionally biased region" description="Basic and acidic residues" evidence="5">
    <location>
        <begin position="437"/>
        <end position="446"/>
    </location>
</feature>
<feature type="compositionally biased region" description="Polar residues" evidence="5">
    <location>
        <begin position="460"/>
        <end position="475"/>
    </location>
</feature>
<feature type="compositionally biased region" description="Basic and acidic residues" evidence="5">
    <location>
        <begin position="497"/>
        <end position="514"/>
    </location>
</feature>
<feature type="compositionally biased region" description="Pro residues" evidence="5">
    <location>
        <begin position="567"/>
        <end position="582"/>
    </location>
</feature>
<feature type="compositionally biased region" description="Basic and acidic residues" evidence="5">
    <location>
        <begin position="589"/>
        <end position="605"/>
    </location>
</feature>
<feature type="compositionally biased region" description="Pro residues" evidence="5">
    <location>
        <begin position="861"/>
        <end position="871"/>
    </location>
</feature>
<feature type="compositionally biased region" description="Pro residues" evidence="5">
    <location>
        <begin position="933"/>
        <end position="942"/>
    </location>
</feature>
<feature type="compositionally biased region" description="Basic and acidic residues" evidence="5">
    <location>
        <begin position="958"/>
        <end position="969"/>
    </location>
</feature>
<feature type="compositionally biased region" description="Basic residues" evidence="5">
    <location>
        <begin position="1082"/>
        <end position="1094"/>
    </location>
</feature>
<feature type="modified residue" description="Phosphoserine" evidence="15">
    <location>
        <position position="536"/>
    </location>
</feature>
<feature type="modified residue" description="Phosphoserine" evidence="1">
    <location>
        <position position="545"/>
    </location>
</feature>
<feature type="modified residue" description="Phosphoserine" evidence="15">
    <location>
        <position position="569"/>
    </location>
</feature>
<feature type="modified residue" description="Phosphoserine" evidence="12 15">
    <location>
        <position position="604"/>
    </location>
</feature>
<feature type="modified residue" description="Phosphoserine" evidence="15">
    <location>
        <position position="608"/>
    </location>
</feature>
<feature type="modified residue" description="Phosphoserine" evidence="12 14 15">
    <location>
        <position position="612"/>
    </location>
</feature>
<feature type="modified residue" description="Phosphoserine" evidence="15">
    <location>
        <position position="858"/>
    </location>
</feature>
<feature type="modified residue" description="Phosphoserine" evidence="15">
    <location>
        <position position="860"/>
    </location>
</feature>
<feature type="modified residue" description="Phosphoserine" evidence="15">
    <location>
        <position position="867"/>
    </location>
</feature>
<feature type="modified residue" description="Phosphothreonine" evidence="15">
    <location>
        <position position="870"/>
    </location>
</feature>
<feature type="modified residue" description="Phosphoserine" evidence="15">
    <location>
        <position position="871"/>
    </location>
</feature>
<feature type="modified residue" description="Phosphoserine" evidence="11 12 13 14 15">
    <location>
        <position position="903"/>
    </location>
</feature>
<feature type="modified residue" description="Phosphoserine" evidence="11 12 13 14 15">
    <location>
        <position position="907"/>
    </location>
</feature>
<feature type="modified residue" description="Phosphoserine" evidence="12">
    <location>
        <position position="986"/>
    </location>
</feature>
<feature type="splice variant" id="VSP_039543" description="In isoform 3." evidence="8">
    <original>MAAATVGRDTLPEHWSYGVCRDGRVFFINDQLRCTTWLHPRTGEPVNSGHMIRSDLPRGWEEGFTEEGASYFIDHNQQTTAFRHPVTGQFSPENSEFILQEEPNPHMSKQDRNQRPSSMVSETSTAGTASTLEAKPGPKIIKSSSKVHSFGKRDQAIRRNPNVPVVVRGWLHKQDSSGMRLWKRRWFVLADYCLFYYKDSREEAVLGSIPLPSYVISPVAPEDRISRKYSFKAVHTGMRALIYNSSTAGSQAEQSGMRTYYFSADTQEDMNAWVRAMNQAAQVLSRSSLKRDMEKVERQAVPQANHTESCHECGRVGPGHTRDCPHRGHDDIVNFERQEQEGEQYRSQRDPLEGKRDRSKARSPYSPAEEDALFMDLPTGPRGQQAQPQRAEKNGMLPASYGPGEQNGTGGYQRAFPPRTNPEKHSQRKSNLAQVEHWARAQKGDSR</original>
    <variation>MFPKACRTLAWLPDPFLPFLL</variation>
    <location>
        <begin position="1"/>
        <end position="447"/>
    </location>
</feature>
<feature type="splice variant" id="VSP_025592" description="In isoform 2 and isoform 3." evidence="8 9">
    <original>V</original>
    <variation>VQ</variation>
    <location>
        <position position="915"/>
    </location>
</feature>
<feature type="sequence variant" id="VAR_032346" description="In dbSNP:rs35908144.">
    <original>L</original>
    <variation>I</variation>
    <location>
        <position position="241"/>
    </location>
</feature>
<feature type="sequence variant" id="VAR_032347" description="In dbSNP:rs16933529.">
    <original>A</original>
    <variation>V</variation>
    <location>
        <position position="248"/>
    </location>
</feature>
<feature type="sequence variant" id="VAR_032348" description="In dbSNP:rs369819.">
    <original>Q</original>
    <variation>R</variation>
    <location>
        <position position="279"/>
    </location>
</feature>
<feature type="sequence variant" id="VAR_061517" description="In dbSNP:rs61133161.">
    <original>S</original>
    <variation>R</variation>
    <location>
        <position position="689"/>
    </location>
</feature>
<feature type="sequence variant" id="VAR_032349" description="In dbSNP:rs34556458.">
    <original>V</original>
    <variation>I</variation>
    <location>
        <position position="693"/>
    </location>
</feature>
<feature type="sequence conflict" description="In Ref. 1; BAG62985." evidence="10" ref="1">
    <original>D</original>
    <variation>N</variation>
    <location>
        <position position="494"/>
    </location>
</feature>
<feature type="sequence conflict" description="In Ref. 3; AAH71599." evidence="10" ref="3">
    <original>L</original>
    <variation>P</variation>
    <location>
        <position position="981"/>
    </location>
</feature>
<feature type="strand" evidence="16">
    <location>
        <begin position="165"/>
        <end position="174"/>
    </location>
</feature>
<feature type="strand" evidence="17">
    <location>
        <begin position="176"/>
        <end position="179"/>
    </location>
</feature>
<feature type="strand" evidence="16">
    <location>
        <begin position="182"/>
        <end position="190"/>
    </location>
</feature>
<feature type="strand" evidence="16">
    <location>
        <begin position="193"/>
        <end position="199"/>
    </location>
</feature>
<feature type="strand" evidence="16">
    <location>
        <begin position="204"/>
        <end position="210"/>
    </location>
</feature>
<feature type="strand" evidence="16">
    <location>
        <begin position="214"/>
        <end position="218"/>
    </location>
</feature>
<feature type="helix" evidence="16">
    <location>
        <begin position="221"/>
        <end position="223"/>
    </location>
</feature>
<feature type="strand" evidence="16">
    <location>
        <begin position="230"/>
        <end position="235"/>
    </location>
</feature>
<feature type="strand" evidence="16">
    <location>
        <begin position="259"/>
        <end position="263"/>
    </location>
</feature>
<feature type="helix" evidence="16">
    <location>
        <begin position="267"/>
        <end position="281"/>
    </location>
</feature>
<name>PKHA7_HUMAN</name>
<proteinExistence type="evidence at protein level"/>
<comment type="function">
    <text evidence="6 7">Required for zonula adherens biogenesis and maintenance (PubMed:19041755). Acts via its interaction with CAMSAP3, which anchors microtubules at their minus-ends to zonula adherens, leading to the recruitment of KIFC3 kinesin to the junctional site (PubMed:19041755). Mediates docking of ADAM10 to zonula adherens through a PDZD11-dependent interaction with the ADAM10-binding protein TSPAN33 (PubMed:30463011).</text>
</comment>
<comment type="subunit">
    <text evidence="6 7">Interacts with CAMSAP3 and CTNND1 (PubMed:19041755). Interacts (via WW domains) with TSPAN33 (via cytoplasmic domain) and with PDZD11; the interaction with TSPAN33 is dependent on PDZD11 being bound to PLEKHA7 and facilitates the docking of ADAM10 to zonula adherens through interaction of TSPAN33 with ADAM10 (PubMed:30463011).</text>
</comment>
<comment type="interaction">
    <interactant intactId="EBI-2125301">
        <id>Q6IQ23</id>
    </interactant>
    <interactant intactId="EBI-528269">
        <id>Q9UKV8</id>
        <label>AGO2</label>
    </interactant>
    <organismsDiffer>false</organismsDiffer>
    <experiments>7</experiments>
</comment>
<comment type="interaction">
    <interactant intactId="EBI-2125301">
        <id>Q6IQ23</id>
    </interactant>
    <interactant intactId="EBI-476295">
        <id>P31947</id>
        <label>SFN</label>
    </interactant>
    <organismsDiffer>false</organismsDiffer>
    <experiments>4</experiments>
</comment>
<comment type="interaction">
    <interactant intactId="EBI-2125301">
        <id>Q6IQ23</id>
    </interactant>
    <interactant intactId="EBI-356498">
        <id>P62258</id>
        <label>YWHAE</label>
    </interactant>
    <organismsDiffer>false</organismsDiffer>
    <experiments>7</experiments>
</comment>
<comment type="interaction">
    <interactant intactId="EBI-12069346">
        <id>Q6IQ23-2</id>
    </interactant>
    <interactant intactId="EBI-6958971">
        <id>Q9BPU9</id>
        <label>B9D2</label>
    </interactant>
    <organismsDiffer>false</organismsDiffer>
    <experiments>3</experiments>
</comment>
<comment type="interaction">
    <interactant intactId="EBI-12069346">
        <id>Q6IQ23-2</id>
    </interactant>
    <interactant intactId="EBI-10175300">
        <id>Q8TD31-3</id>
        <label>CCHCR1</label>
    </interactant>
    <organismsDiffer>false</organismsDiffer>
    <experiments>3</experiments>
</comment>
<comment type="interaction">
    <interactant intactId="EBI-12069346">
        <id>Q6IQ23-2</id>
    </interactant>
    <interactant intactId="EBI-748961">
        <id>O95273</id>
        <label>CCNDBP1</label>
    </interactant>
    <organismsDiffer>false</organismsDiffer>
    <experiments>3</experiments>
</comment>
<comment type="interaction">
    <interactant intactId="EBI-12069346">
        <id>Q6IQ23-2</id>
    </interactant>
    <interactant intactId="EBI-12958227">
        <id>Q86W67</id>
        <label>FAM228A</label>
    </interactant>
    <organismsDiffer>false</organismsDiffer>
    <experiments>3</experiments>
</comment>
<comment type="interaction">
    <interactant intactId="EBI-12069346">
        <id>Q6IQ23-2</id>
    </interactant>
    <interactant intactId="EBI-401755">
        <id>P62993</id>
        <label>GRB2</label>
    </interactant>
    <organismsDiffer>false</organismsDiffer>
    <experiments>3</experiments>
</comment>
<comment type="interaction">
    <interactant intactId="EBI-12069346">
        <id>Q6IQ23-2</id>
    </interactant>
    <interactant intactId="EBI-7116203">
        <id>O75031</id>
        <label>HSF2BP</label>
    </interactant>
    <organismsDiffer>false</organismsDiffer>
    <experiments>3</experiments>
</comment>
<comment type="interaction">
    <interactant intactId="EBI-12069346">
        <id>Q6IQ23-2</id>
    </interactant>
    <interactant intactId="EBI-947015">
        <id>P24592</id>
        <label>IGFBP6</label>
    </interactant>
    <organismsDiffer>false</organismsDiffer>
    <experiments>3</experiments>
</comment>
<comment type="interaction">
    <interactant intactId="EBI-12069346">
        <id>Q6IQ23-2</id>
    </interactant>
    <interactant intactId="EBI-18115692">
        <id>Q6UWQ7-2</id>
        <label>IGFL2</label>
    </interactant>
    <organismsDiffer>false</organismsDiffer>
    <experiments>3</experiments>
</comment>
<comment type="interaction">
    <interactant intactId="EBI-12069346">
        <id>Q6IQ23-2</id>
    </interactant>
    <interactant intactId="EBI-1216080">
        <id>Q9Y250</id>
        <label>LZTS1</label>
    </interactant>
    <organismsDiffer>false</organismsDiffer>
    <experiments>3</experiments>
</comment>
<comment type="interaction">
    <interactant intactId="EBI-12069346">
        <id>Q6IQ23-2</id>
    </interactant>
    <interactant intactId="EBI-11750983">
        <id>Q9HC98-4</id>
        <label>NEK6</label>
    </interactant>
    <organismsDiffer>false</organismsDiffer>
    <experiments>3</experiments>
</comment>
<comment type="interaction">
    <interactant intactId="EBI-12069346">
        <id>Q6IQ23-2</id>
    </interactant>
    <interactant intactId="EBI-14066006">
        <id>Q4G0R1</id>
        <label>PIBF1</label>
    </interactant>
    <organismsDiffer>false</organismsDiffer>
    <experiments>3</experiments>
</comment>
<comment type="interaction">
    <interactant intactId="EBI-12069346">
        <id>Q6IQ23-2</id>
    </interactant>
    <interactant intactId="EBI-79165">
        <id>Q9NRD5</id>
        <label>PICK1</label>
    </interactant>
    <organismsDiffer>false</organismsDiffer>
    <experiments>3</experiments>
</comment>
<comment type="interaction">
    <interactant intactId="EBI-12069346">
        <id>Q6IQ23-2</id>
    </interactant>
    <interactant intactId="EBI-368321">
        <id>O60437</id>
        <label>PPL</label>
    </interactant>
    <organismsDiffer>false</organismsDiffer>
    <experiments>3</experiments>
</comment>
<comment type="interaction">
    <interactant intactId="EBI-12069346">
        <id>Q6IQ23-2</id>
    </interactant>
    <interactant intactId="EBI-3916363">
        <id>Q96NR8</id>
        <label>RDH12</label>
    </interactant>
    <organismsDiffer>false</organismsDiffer>
    <experiments>3</experiments>
</comment>
<comment type="interaction">
    <interactant intactId="EBI-12069346">
        <id>Q6IQ23-2</id>
    </interactant>
    <interactant intactId="EBI-1244971">
        <id>Q15669</id>
        <label>RHOH</label>
    </interactant>
    <organismsDiffer>false</organismsDiffer>
    <experiments>3</experiments>
</comment>
<comment type="interaction">
    <interactant intactId="EBI-12069346">
        <id>Q6IQ23-2</id>
    </interactant>
    <interactant intactId="EBI-725557">
        <id>Q9NZ72</id>
        <label>STMN3</label>
    </interactant>
    <organismsDiffer>false</organismsDiffer>
    <experiments>3</experiments>
</comment>
<comment type="interaction">
    <interactant intactId="EBI-12069346">
        <id>Q6IQ23-2</id>
    </interactant>
    <interactant intactId="EBI-3650647">
        <id>Q9BUZ4</id>
        <label>TRAF4</label>
    </interactant>
    <organismsDiffer>false</organismsDiffer>
    <experiments>3</experiments>
</comment>
<comment type="interaction">
    <interactant intactId="EBI-12069346">
        <id>Q6IQ23-2</id>
    </interactant>
    <interactant intactId="EBI-744794">
        <id>Q9BZW7</id>
        <label>TSGA10</label>
    </interactant>
    <organismsDiffer>false</organismsDiffer>
    <experiments>3</experiments>
</comment>
<comment type="interaction">
    <interactant intactId="EBI-12069346">
        <id>Q6IQ23-2</id>
    </interactant>
    <interactant intactId="EBI-7850213">
        <id>Q9UDW3</id>
        <label>ZMAT5</label>
    </interactant>
    <organismsDiffer>false</organismsDiffer>
    <experiments>3</experiments>
</comment>
<comment type="subcellular location">
    <subcellularLocation>
        <location evidence="6 7">Cell junction</location>
        <location evidence="6 7">Adherens junction</location>
    </subcellularLocation>
    <subcellularLocation>
        <location evidence="6">Cytoplasm</location>
    </subcellularLocation>
    <subcellularLocation>
        <location evidence="6">Cytoplasm</location>
        <location evidence="6">Cytoskeleton</location>
        <location evidence="6">Microtubule organizing center</location>
        <location evidence="6">Centrosome</location>
    </subcellularLocation>
    <text evidence="6">Localizes to zonula adherens, recruited via its interaction with CTNND1.</text>
</comment>
<comment type="alternative products">
    <event type="alternative splicing"/>
    <isoform>
        <id>Q6IQ23-1</id>
        <name>1</name>
        <sequence type="displayed"/>
    </isoform>
    <isoform>
        <id>Q6IQ23-2</id>
        <name>2</name>
        <sequence type="described" ref="VSP_025592"/>
    </isoform>
    <isoform>
        <id>Q6IQ23-3</id>
        <name>3</name>
        <sequence type="described" ref="VSP_039543 VSP_025592"/>
    </isoform>
</comment>
<comment type="sequence caution" evidence="10">
    <conflict type="erroneous initiation">
        <sequence resource="EMBL-CDS" id="AAH33239"/>
    </conflict>
    <text>Truncated N-terminus.</text>
</comment>
<comment type="sequence caution" evidence="10">
    <conflict type="erroneous initiation">
        <sequence resource="EMBL-CDS" id="BAG62985"/>
    </conflict>
    <text>Truncated N-terminus.</text>
</comment>
<protein>
    <recommendedName>
        <fullName>Pleckstrin homology domain-containing family A member 7</fullName>
        <shortName>PH domain-containing family A member 7</shortName>
    </recommendedName>
</protein>
<gene>
    <name type="primary">PLEKHA7</name>
</gene>
<accession>Q6IQ23</accession>
<accession>B4DK33</accession>
<accession>B4DWC3</accession>
<accession>Q86VZ7</accession>
<evidence type="ECO:0000250" key="1">
    <source>
        <dbReference type="UniProtKB" id="Q3UIL6"/>
    </source>
</evidence>
<evidence type="ECO:0000255" key="2"/>
<evidence type="ECO:0000255" key="3">
    <source>
        <dbReference type="PROSITE-ProRule" id="PRU00145"/>
    </source>
</evidence>
<evidence type="ECO:0000255" key="4">
    <source>
        <dbReference type="PROSITE-ProRule" id="PRU00224"/>
    </source>
</evidence>
<evidence type="ECO:0000256" key="5">
    <source>
        <dbReference type="SAM" id="MobiDB-lite"/>
    </source>
</evidence>
<evidence type="ECO:0000269" key="6">
    <source>
    </source>
</evidence>
<evidence type="ECO:0000269" key="7">
    <source>
    </source>
</evidence>
<evidence type="ECO:0000303" key="8">
    <source>
    </source>
</evidence>
<evidence type="ECO:0000303" key="9">
    <source>
    </source>
</evidence>
<evidence type="ECO:0000305" key="10"/>
<evidence type="ECO:0007744" key="11">
    <source>
    </source>
</evidence>
<evidence type="ECO:0007744" key="12">
    <source>
    </source>
</evidence>
<evidence type="ECO:0007744" key="13">
    <source>
    </source>
</evidence>
<evidence type="ECO:0007744" key="14">
    <source>
    </source>
</evidence>
<evidence type="ECO:0007744" key="15">
    <source>
    </source>
</evidence>
<evidence type="ECO:0007829" key="16">
    <source>
        <dbReference type="PDB" id="7KJO"/>
    </source>
</evidence>
<evidence type="ECO:0007829" key="17">
    <source>
        <dbReference type="PDB" id="7KK7"/>
    </source>
</evidence>
<organism>
    <name type="scientific">Homo sapiens</name>
    <name type="common">Human</name>
    <dbReference type="NCBI Taxonomy" id="9606"/>
    <lineage>
        <taxon>Eukaryota</taxon>
        <taxon>Metazoa</taxon>
        <taxon>Chordata</taxon>
        <taxon>Craniata</taxon>
        <taxon>Vertebrata</taxon>
        <taxon>Euteleostomi</taxon>
        <taxon>Mammalia</taxon>
        <taxon>Eutheria</taxon>
        <taxon>Euarchontoglires</taxon>
        <taxon>Primates</taxon>
        <taxon>Haplorrhini</taxon>
        <taxon>Catarrhini</taxon>
        <taxon>Hominidae</taxon>
        <taxon>Homo</taxon>
    </lineage>
</organism>
<dbReference type="EMBL" id="AK296371">
    <property type="protein sequence ID" value="BAG59045.1"/>
    <property type="molecule type" value="mRNA"/>
</dbReference>
<dbReference type="EMBL" id="AK301465">
    <property type="protein sequence ID" value="BAG62985.1"/>
    <property type="status" value="ALT_INIT"/>
    <property type="molecule type" value="mRNA"/>
</dbReference>
<dbReference type="EMBL" id="AC026639">
    <property type="status" value="NOT_ANNOTATED_CDS"/>
    <property type="molecule type" value="Genomic_DNA"/>
</dbReference>
<dbReference type="EMBL" id="AC116533">
    <property type="status" value="NOT_ANNOTATED_CDS"/>
    <property type="molecule type" value="Genomic_DNA"/>
</dbReference>
<dbReference type="EMBL" id="AC127033">
    <property type="status" value="NOT_ANNOTATED_CDS"/>
    <property type="molecule type" value="Genomic_DNA"/>
</dbReference>
<dbReference type="EMBL" id="BC033239">
    <property type="protein sequence ID" value="AAH33239.1"/>
    <property type="status" value="ALT_INIT"/>
    <property type="molecule type" value="mRNA"/>
</dbReference>
<dbReference type="EMBL" id="BC071599">
    <property type="protein sequence ID" value="AAH71599.1"/>
    <property type="molecule type" value="mRNA"/>
</dbReference>
<dbReference type="CCDS" id="CCDS31434.1">
    <molecule id="Q6IQ23-1"/>
</dbReference>
<dbReference type="RefSeq" id="NP_001316559.1">
    <property type="nucleotide sequence ID" value="NM_001329630.1"/>
</dbReference>
<dbReference type="RefSeq" id="NP_001316560.1">
    <molecule id="Q6IQ23-2"/>
    <property type="nucleotide sequence ID" value="NM_001329631.2"/>
</dbReference>
<dbReference type="RefSeq" id="NP_778228.3">
    <molecule id="Q6IQ23-1"/>
    <property type="nucleotide sequence ID" value="NM_175058.4"/>
</dbReference>
<dbReference type="PDB" id="7KJO">
    <property type="method" value="X-ray"/>
    <property type="resolution" value="1.45 A"/>
    <property type="chains" value="A/B=164-298"/>
</dbReference>
<dbReference type="PDB" id="7KJZ">
    <property type="method" value="X-ray"/>
    <property type="resolution" value="2.43 A"/>
    <property type="chains" value="A/B=164-298"/>
</dbReference>
<dbReference type="PDB" id="7KK7">
    <property type="method" value="X-ray"/>
    <property type="resolution" value="2.80 A"/>
    <property type="chains" value="A/B=164-285"/>
</dbReference>
<dbReference type="PDBsum" id="7KJO"/>
<dbReference type="PDBsum" id="7KJZ"/>
<dbReference type="PDBsum" id="7KK7"/>
<dbReference type="SMR" id="Q6IQ23"/>
<dbReference type="BioGRID" id="126828">
    <property type="interactions" value="122"/>
</dbReference>
<dbReference type="CORUM" id="Q6IQ23"/>
<dbReference type="FunCoup" id="Q6IQ23">
    <property type="interactions" value="694"/>
</dbReference>
<dbReference type="IntAct" id="Q6IQ23">
    <property type="interactions" value="626"/>
</dbReference>
<dbReference type="MINT" id="Q6IQ23"/>
<dbReference type="STRING" id="9606.ENSP00000435389"/>
<dbReference type="ChEMBL" id="CHEMBL4296241"/>
<dbReference type="CarbonylDB" id="Q6IQ23"/>
<dbReference type="GlyGen" id="Q6IQ23">
    <property type="glycosylation" value="2 sites, 1 N-linked glycan (1 site), 1 O-linked glycan (1 site)"/>
</dbReference>
<dbReference type="iPTMnet" id="Q6IQ23"/>
<dbReference type="PhosphoSitePlus" id="Q6IQ23"/>
<dbReference type="BioMuta" id="PLEKHA7"/>
<dbReference type="DMDM" id="215273867"/>
<dbReference type="jPOST" id="Q6IQ23"/>
<dbReference type="MassIVE" id="Q6IQ23"/>
<dbReference type="PaxDb" id="9606-ENSP00000347883"/>
<dbReference type="PeptideAtlas" id="Q6IQ23"/>
<dbReference type="ProteomicsDB" id="66479">
    <molecule id="Q6IQ23-1"/>
</dbReference>
<dbReference type="ProteomicsDB" id="66480">
    <molecule id="Q6IQ23-2"/>
</dbReference>
<dbReference type="ProteomicsDB" id="66481">
    <molecule id="Q6IQ23-3"/>
</dbReference>
<dbReference type="Pumba" id="Q6IQ23"/>
<dbReference type="Antibodypedia" id="42457">
    <property type="antibodies" value="117 antibodies from 19 providers"/>
</dbReference>
<dbReference type="DNASU" id="144100"/>
<dbReference type="Ensembl" id="ENST00000355661.7">
    <molecule id="Q6IQ23-1"/>
    <property type="protein sequence ID" value="ENSP00000347883.2"/>
    <property type="gene ID" value="ENSG00000166689.18"/>
</dbReference>
<dbReference type="GeneID" id="144100"/>
<dbReference type="KEGG" id="hsa:144100"/>
<dbReference type="UCSC" id="uc001mmo.4">
    <molecule id="Q6IQ23-1"/>
    <property type="organism name" value="human"/>
</dbReference>
<dbReference type="AGR" id="HGNC:27049"/>
<dbReference type="CTD" id="144100"/>
<dbReference type="DisGeNET" id="144100"/>
<dbReference type="GeneCards" id="PLEKHA7"/>
<dbReference type="HGNC" id="HGNC:27049">
    <property type="gene designation" value="PLEKHA7"/>
</dbReference>
<dbReference type="HPA" id="ENSG00000166689">
    <property type="expression patterns" value="Low tissue specificity"/>
</dbReference>
<dbReference type="MIM" id="612686">
    <property type="type" value="gene"/>
</dbReference>
<dbReference type="neXtProt" id="NX_Q6IQ23"/>
<dbReference type="OpenTargets" id="ENSG00000166689"/>
<dbReference type="PharmGKB" id="PA134894945"/>
<dbReference type="VEuPathDB" id="HostDB:ENSG00000166689"/>
<dbReference type="eggNOG" id="KOG0940">
    <property type="taxonomic scope" value="Eukaryota"/>
</dbReference>
<dbReference type="GeneTree" id="ENSGT00940000155817"/>
<dbReference type="HOGENOM" id="CLU_008216_1_0_1"/>
<dbReference type="InParanoid" id="Q6IQ23"/>
<dbReference type="OrthoDB" id="43122at2759"/>
<dbReference type="PAN-GO" id="Q6IQ23">
    <property type="GO annotations" value="6 GO annotations based on evolutionary models"/>
</dbReference>
<dbReference type="PhylomeDB" id="Q6IQ23"/>
<dbReference type="TreeFam" id="TF329090"/>
<dbReference type="PathwayCommons" id="Q6IQ23"/>
<dbReference type="SignaLink" id="Q6IQ23"/>
<dbReference type="SIGNOR" id="Q6IQ23"/>
<dbReference type="BioGRID-ORCS" id="144100">
    <property type="hits" value="11 hits in 1152 CRISPR screens"/>
</dbReference>
<dbReference type="ChiTaRS" id="PLEKHA7">
    <property type="organism name" value="human"/>
</dbReference>
<dbReference type="GenomeRNAi" id="144100"/>
<dbReference type="Pharos" id="Q6IQ23">
    <property type="development level" value="Tbio"/>
</dbReference>
<dbReference type="PRO" id="PR:Q6IQ23"/>
<dbReference type="Proteomes" id="UP000005640">
    <property type="component" value="Chromosome 11"/>
</dbReference>
<dbReference type="RNAct" id="Q6IQ23">
    <property type="molecule type" value="protein"/>
</dbReference>
<dbReference type="Bgee" id="ENSG00000166689">
    <property type="expression patterns" value="Expressed in sural nerve and 142 other cell types or tissues"/>
</dbReference>
<dbReference type="ExpressionAtlas" id="Q6IQ23">
    <property type="expression patterns" value="baseline and differential"/>
</dbReference>
<dbReference type="GO" id="GO:0030054">
    <property type="term" value="C:cell junction"/>
    <property type="evidence" value="ECO:0000314"/>
    <property type="project" value="HPA"/>
</dbReference>
<dbReference type="GO" id="GO:0005813">
    <property type="term" value="C:centrosome"/>
    <property type="evidence" value="ECO:0000314"/>
    <property type="project" value="UniProtKB"/>
</dbReference>
<dbReference type="GO" id="GO:0005829">
    <property type="term" value="C:cytosol"/>
    <property type="evidence" value="ECO:0000314"/>
    <property type="project" value="HPA"/>
</dbReference>
<dbReference type="GO" id="GO:0070062">
    <property type="term" value="C:extracellular exosome"/>
    <property type="evidence" value="ECO:0007005"/>
    <property type="project" value="UniProtKB"/>
</dbReference>
<dbReference type="GO" id="GO:0005654">
    <property type="term" value="C:nucleoplasm"/>
    <property type="evidence" value="ECO:0000314"/>
    <property type="project" value="HPA"/>
</dbReference>
<dbReference type="GO" id="GO:0046930">
    <property type="term" value="C:pore complex"/>
    <property type="evidence" value="ECO:0000315"/>
    <property type="project" value="UniProtKB"/>
</dbReference>
<dbReference type="GO" id="GO:0005915">
    <property type="term" value="C:zonula adherens"/>
    <property type="evidence" value="ECO:0000314"/>
    <property type="project" value="UniProtKB"/>
</dbReference>
<dbReference type="GO" id="GO:0070097">
    <property type="term" value="F:delta-catenin binding"/>
    <property type="evidence" value="ECO:0000314"/>
    <property type="project" value="UniProtKB"/>
</dbReference>
<dbReference type="GO" id="GO:0044331">
    <property type="term" value="P:cell-cell adhesion mediated by cadherin"/>
    <property type="evidence" value="ECO:0000250"/>
    <property type="project" value="ARUK-UCL"/>
</dbReference>
<dbReference type="GO" id="GO:0090136">
    <property type="term" value="P:epithelial cell-cell adhesion"/>
    <property type="evidence" value="ECO:0000315"/>
    <property type="project" value="UniProtKB"/>
</dbReference>
<dbReference type="GO" id="GO:0046931">
    <property type="term" value="P:pore complex assembly"/>
    <property type="evidence" value="ECO:0000315"/>
    <property type="project" value="UniProtKB"/>
</dbReference>
<dbReference type="GO" id="GO:0045218">
    <property type="term" value="P:zonula adherens maintenance"/>
    <property type="evidence" value="ECO:0000315"/>
    <property type="project" value="UniProtKB"/>
</dbReference>
<dbReference type="CDD" id="cd13248">
    <property type="entry name" value="PH_PEPP1_2_3"/>
    <property type="match status" value="1"/>
</dbReference>
<dbReference type="CDD" id="cd00201">
    <property type="entry name" value="WW"/>
    <property type="match status" value="1"/>
</dbReference>
<dbReference type="FunFam" id="2.30.29.30:FF:000103">
    <property type="entry name" value="Pleckstrin homology domain-containing family A member 4"/>
    <property type="match status" value="1"/>
</dbReference>
<dbReference type="FunFam" id="2.20.70.10:FF:000027">
    <property type="entry name" value="pleckstrin homology domain-containing family A member 5 isoform X1"/>
    <property type="match status" value="1"/>
</dbReference>
<dbReference type="FunFam" id="2.20.70.10:FF:000059">
    <property type="entry name" value="pleckstrin homology domain-containing family A member 7"/>
    <property type="match status" value="1"/>
</dbReference>
<dbReference type="Gene3D" id="2.20.70.10">
    <property type="match status" value="2"/>
</dbReference>
<dbReference type="Gene3D" id="2.30.29.30">
    <property type="entry name" value="Pleckstrin-homology domain (PH domain)/Phosphotyrosine-binding domain (PTB)"/>
    <property type="match status" value="1"/>
</dbReference>
<dbReference type="InterPro" id="IPR011993">
    <property type="entry name" value="PH-like_dom_sf"/>
</dbReference>
<dbReference type="InterPro" id="IPR001849">
    <property type="entry name" value="PH_domain"/>
</dbReference>
<dbReference type="InterPro" id="IPR040392">
    <property type="entry name" value="PKHA4-7_PH"/>
</dbReference>
<dbReference type="InterPro" id="IPR001202">
    <property type="entry name" value="WW_dom"/>
</dbReference>
<dbReference type="InterPro" id="IPR036020">
    <property type="entry name" value="WW_dom_sf"/>
</dbReference>
<dbReference type="PANTHER" id="PTHR12752">
    <property type="entry name" value="PHOSPHOINOSITOL 3-PHOSPHATE-BINDING PROTEIN"/>
    <property type="match status" value="1"/>
</dbReference>
<dbReference type="PANTHER" id="PTHR12752:SF4">
    <property type="entry name" value="PLECKSTRIN HOMOLOGY DOMAIN-CONTAINING FAMILY A MEMBER 7"/>
    <property type="match status" value="1"/>
</dbReference>
<dbReference type="Pfam" id="PF00169">
    <property type="entry name" value="PH"/>
    <property type="match status" value="1"/>
</dbReference>
<dbReference type="SMART" id="SM00233">
    <property type="entry name" value="PH"/>
    <property type="match status" value="1"/>
</dbReference>
<dbReference type="SMART" id="SM00456">
    <property type="entry name" value="WW"/>
    <property type="match status" value="2"/>
</dbReference>
<dbReference type="SUPFAM" id="SSF50729">
    <property type="entry name" value="PH domain-like"/>
    <property type="match status" value="1"/>
</dbReference>
<dbReference type="SUPFAM" id="SSF51045">
    <property type="entry name" value="WW domain"/>
    <property type="match status" value="2"/>
</dbReference>
<dbReference type="PROSITE" id="PS50003">
    <property type="entry name" value="PH_DOMAIN"/>
    <property type="match status" value="1"/>
</dbReference>
<dbReference type="PROSITE" id="PS01159">
    <property type="entry name" value="WW_DOMAIN_1"/>
    <property type="match status" value="1"/>
</dbReference>
<dbReference type="PROSITE" id="PS50020">
    <property type="entry name" value="WW_DOMAIN_2"/>
    <property type="match status" value="2"/>
</dbReference>